<protein>
    <recommendedName>
        <fullName>Probable xyloglucan endotransglucosylase/hydrolase protein 8</fullName>
        <shortName>At-XTH8</shortName>
        <shortName>XTH-8</shortName>
        <ecNumber>2.4.1.207</ecNumber>
    </recommendedName>
</protein>
<reference key="1">
    <citation type="journal article" date="2000" name="Nature">
        <title>Sequence and analysis of chromosome 1 of the plant Arabidopsis thaliana.</title>
        <authorList>
            <person name="Theologis A."/>
            <person name="Ecker J.R."/>
            <person name="Palm C.J."/>
            <person name="Federspiel N.A."/>
            <person name="Kaul S."/>
            <person name="White O."/>
            <person name="Alonso J."/>
            <person name="Altafi H."/>
            <person name="Araujo R."/>
            <person name="Bowman C.L."/>
            <person name="Brooks S.Y."/>
            <person name="Buehler E."/>
            <person name="Chan A."/>
            <person name="Chao Q."/>
            <person name="Chen H."/>
            <person name="Cheuk R.F."/>
            <person name="Chin C.W."/>
            <person name="Chung M.K."/>
            <person name="Conn L."/>
            <person name="Conway A.B."/>
            <person name="Conway A.R."/>
            <person name="Creasy T.H."/>
            <person name="Dewar K."/>
            <person name="Dunn P."/>
            <person name="Etgu P."/>
            <person name="Feldblyum T.V."/>
            <person name="Feng J.-D."/>
            <person name="Fong B."/>
            <person name="Fujii C.Y."/>
            <person name="Gill J.E."/>
            <person name="Goldsmith A.D."/>
            <person name="Haas B."/>
            <person name="Hansen N.F."/>
            <person name="Hughes B."/>
            <person name="Huizar L."/>
            <person name="Hunter J.L."/>
            <person name="Jenkins J."/>
            <person name="Johnson-Hopson C."/>
            <person name="Khan S."/>
            <person name="Khaykin E."/>
            <person name="Kim C.J."/>
            <person name="Koo H.L."/>
            <person name="Kremenetskaia I."/>
            <person name="Kurtz D.B."/>
            <person name="Kwan A."/>
            <person name="Lam B."/>
            <person name="Langin-Hooper S."/>
            <person name="Lee A."/>
            <person name="Lee J.M."/>
            <person name="Lenz C.A."/>
            <person name="Li J.H."/>
            <person name="Li Y.-P."/>
            <person name="Lin X."/>
            <person name="Liu S.X."/>
            <person name="Liu Z.A."/>
            <person name="Luros J.S."/>
            <person name="Maiti R."/>
            <person name="Marziali A."/>
            <person name="Militscher J."/>
            <person name="Miranda M."/>
            <person name="Nguyen M."/>
            <person name="Nierman W.C."/>
            <person name="Osborne B.I."/>
            <person name="Pai G."/>
            <person name="Peterson J."/>
            <person name="Pham P.K."/>
            <person name="Rizzo M."/>
            <person name="Rooney T."/>
            <person name="Rowley D."/>
            <person name="Sakano H."/>
            <person name="Salzberg S.L."/>
            <person name="Schwartz J.R."/>
            <person name="Shinn P."/>
            <person name="Southwick A.M."/>
            <person name="Sun H."/>
            <person name="Tallon L.J."/>
            <person name="Tambunga G."/>
            <person name="Toriumi M.J."/>
            <person name="Town C.D."/>
            <person name="Utterback T."/>
            <person name="Van Aken S."/>
            <person name="Vaysberg M."/>
            <person name="Vysotskaia V.S."/>
            <person name="Walker M."/>
            <person name="Wu D."/>
            <person name="Yu G."/>
            <person name="Fraser C.M."/>
            <person name="Venter J.C."/>
            <person name="Davis R.W."/>
        </authorList>
    </citation>
    <scope>NUCLEOTIDE SEQUENCE [LARGE SCALE GENOMIC DNA]</scope>
    <source>
        <strain>cv. Columbia</strain>
    </source>
</reference>
<reference key="2">
    <citation type="journal article" date="2017" name="Plant J.">
        <title>Araport11: a complete reannotation of the Arabidopsis thaliana reference genome.</title>
        <authorList>
            <person name="Cheng C.Y."/>
            <person name="Krishnakumar V."/>
            <person name="Chan A.P."/>
            <person name="Thibaud-Nissen F."/>
            <person name="Schobel S."/>
            <person name="Town C.D."/>
        </authorList>
    </citation>
    <scope>GENOME REANNOTATION</scope>
    <source>
        <strain>cv. Columbia</strain>
    </source>
</reference>
<reference key="3">
    <citation type="submission" date="2006-07" db="EMBL/GenBank/DDBJ databases">
        <title>Large-scale analysis of RIKEN Arabidopsis full-length (RAFL) cDNAs.</title>
        <authorList>
            <person name="Totoki Y."/>
            <person name="Seki M."/>
            <person name="Ishida J."/>
            <person name="Nakajima M."/>
            <person name="Enju A."/>
            <person name="Kamiya A."/>
            <person name="Narusaka M."/>
            <person name="Shin-i T."/>
            <person name="Nakagawa M."/>
            <person name="Sakamoto N."/>
            <person name="Oishi K."/>
            <person name="Kohara Y."/>
            <person name="Kobayashi M."/>
            <person name="Toyoda A."/>
            <person name="Sakaki Y."/>
            <person name="Sakurai T."/>
            <person name="Iida K."/>
            <person name="Akiyama K."/>
            <person name="Satou M."/>
            <person name="Toyoda T."/>
            <person name="Konagaya A."/>
            <person name="Carninci P."/>
            <person name="Kawai J."/>
            <person name="Hayashizaki Y."/>
            <person name="Shinozaki K."/>
        </authorList>
    </citation>
    <scope>NUCLEOTIDE SEQUENCE [LARGE SCALE MRNA]</scope>
    <source>
        <strain>cv. Columbia</strain>
    </source>
</reference>
<reference key="4">
    <citation type="submission" date="2002-03" db="EMBL/GenBank/DDBJ databases">
        <title>Full-length cDNA from Arabidopsis thaliana.</title>
        <authorList>
            <person name="Brover V.V."/>
            <person name="Troukhan M.E."/>
            <person name="Alexandrov N.A."/>
            <person name="Lu Y.-P."/>
            <person name="Flavell R.B."/>
            <person name="Feldmann K.A."/>
        </authorList>
    </citation>
    <scope>NUCLEOTIDE SEQUENCE [LARGE SCALE MRNA]</scope>
</reference>
<reference key="5">
    <citation type="journal article" date="2002" name="Plant Cell Physiol.">
        <title>The XTH family of enzymes involved in xyloglucan endotransglucosylation and endohydrolysis: current perspectives and a new unifying nomenclature.</title>
        <authorList>
            <person name="Rose J.K.C."/>
            <person name="Braam J."/>
            <person name="Fry S.C."/>
            <person name="Nishitani K."/>
        </authorList>
    </citation>
    <scope>NOMENCLATURE</scope>
</reference>
<proteinExistence type="evidence at transcript level"/>
<gene>
    <name type="primary">XTH8</name>
    <name type="ordered locus">At1g11545</name>
    <name type="ORF">T23J18.21</name>
</gene>
<keyword id="KW-0052">Apoplast</keyword>
<keyword id="KW-0134">Cell wall</keyword>
<keyword id="KW-0961">Cell wall biogenesis/degradation</keyword>
<keyword id="KW-1015">Disulfide bond</keyword>
<keyword id="KW-0325">Glycoprotein</keyword>
<keyword id="KW-0326">Glycosidase</keyword>
<keyword id="KW-0378">Hydrolase</keyword>
<keyword id="KW-1185">Reference proteome</keyword>
<keyword id="KW-0964">Secreted</keyword>
<keyword id="KW-0732">Signal</keyword>
<keyword id="KW-0808">Transferase</keyword>
<dbReference type="EC" id="2.4.1.207"/>
<dbReference type="EMBL" id="AC011661">
    <property type="protein sequence ID" value="AAF16642.1"/>
    <property type="status" value="ALT_SEQ"/>
    <property type="molecule type" value="Genomic_DNA"/>
</dbReference>
<dbReference type="EMBL" id="CP002684">
    <property type="protein sequence ID" value="AEE28750.1"/>
    <property type="molecule type" value="Genomic_DNA"/>
</dbReference>
<dbReference type="EMBL" id="AK228427">
    <property type="protein sequence ID" value="BAF00360.1"/>
    <property type="molecule type" value="mRNA"/>
</dbReference>
<dbReference type="EMBL" id="AY088546">
    <property type="protein sequence ID" value="AAM66078.1"/>
    <property type="status" value="ALT_INIT"/>
    <property type="molecule type" value="mRNA"/>
</dbReference>
<dbReference type="PIR" id="G86248">
    <property type="entry name" value="G86248"/>
</dbReference>
<dbReference type="RefSeq" id="NP_563892.1">
    <property type="nucleotide sequence ID" value="NM_101028.4"/>
</dbReference>
<dbReference type="SMR" id="Q8L9A9"/>
<dbReference type="FunCoup" id="Q8L9A9">
    <property type="interactions" value="50"/>
</dbReference>
<dbReference type="STRING" id="3702.Q8L9A9"/>
<dbReference type="CAZy" id="GH16">
    <property type="family name" value="Glycoside Hydrolase Family 16"/>
</dbReference>
<dbReference type="GlyCosmos" id="Q8L9A9">
    <property type="glycosylation" value="4 sites, No reported glycans"/>
</dbReference>
<dbReference type="GlyGen" id="Q8L9A9">
    <property type="glycosylation" value="4 sites"/>
</dbReference>
<dbReference type="PaxDb" id="3702-AT1G11545.1"/>
<dbReference type="ProteomicsDB" id="243046"/>
<dbReference type="EnsemblPlants" id="AT1G11545.1">
    <property type="protein sequence ID" value="AT1G11545.1"/>
    <property type="gene ID" value="AT1G11545"/>
</dbReference>
<dbReference type="GeneID" id="837698"/>
<dbReference type="Gramene" id="AT1G11545.1">
    <property type="protein sequence ID" value="AT1G11545.1"/>
    <property type="gene ID" value="AT1G11545"/>
</dbReference>
<dbReference type="KEGG" id="ath:AT1G11545"/>
<dbReference type="Araport" id="AT1G11545"/>
<dbReference type="TAIR" id="AT1G11545">
    <property type="gene designation" value="XTH8"/>
</dbReference>
<dbReference type="eggNOG" id="ENOG502QRCC">
    <property type="taxonomic scope" value="Eukaryota"/>
</dbReference>
<dbReference type="HOGENOM" id="CLU_048041_2_1_1"/>
<dbReference type="InParanoid" id="Q8L9A9"/>
<dbReference type="OMA" id="EDNFNIM"/>
<dbReference type="OrthoDB" id="4781at2759"/>
<dbReference type="BioCyc" id="ARA:AT1G11545-MONOMER"/>
<dbReference type="PRO" id="PR:Q8L9A9"/>
<dbReference type="Proteomes" id="UP000006548">
    <property type="component" value="Chromosome 1"/>
</dbReference>
<dbReference type="ExpressionAtlas" id="Q8L9A9">
    <property type="expression patterns" value="baseline and differential"/>
</dbReference>
<dbReference type="GO" id="GO:0048046">
    <property type="term" value="C:apoplast"/>
    <property type="evidence" value="ECO:0007669"/>
    <property type="project" value="UniProtKB-SubCell"/>
</dbReference>
<dbReference type="GO" id="GO:0004553">
    <property type="term" value="F:hydrolase activity, hydrolyzing O-glycosyl compounds"/>
    <property type="evidence" value="ECO:0007669"/>
    <property type="project" value="InterPro"/>
</dbReference>
<dbReference type="GO" id="GO:0030247">
    <property type="term" value="F:polysaccharide binding"/>
    <property type="evidence" value="ECO:0000250"/>
    <property type="project" value="UniProtKB"/>
</dbReference>
<dbReference type="GO" id="GO:0016762">
    <property type="term" value="F:xyloglucan:xyloglucosyl transferase activity"/>
    <property type="evidence" value="ECO:0007669"/>
    <property type="project" value="UniProtKB-EC"/>
</dbReference>
<dbReference type="GO" id="GO:0042546">
    <property type="term" value="P:cell wall biogenesis"/>
    <property type="evidence" value="ECO:0007669"/>
    <property type="project" value="InterPro"/>
</dbReference>
<dbReference type="GO" id="GO:0071555">
    <property type="term" value="P:cell wall organization"/>
    <property type="evidence" value="ECO:0007669"/>
    <property type="project" value="UniProtKB-KW"/>
</dbReference>
<dbReference type="GO" id="GO:0010411">
    <property type="term" value="P:xyloglucan metabolic process"/>
    <property type="evidence" value="ECO:0007669"/>
    <property type="project" value="InterPro"/>
</dbReference>
<dbReference type="CDD" id="cd02176">
    <property type="entry name" value="GH16_XET"/>
    <property type="match status" value="1"/>
</dbReference>
<dbReference type="FunFam" id="2.60.120.200:FF:000025">
    <property type="entry name" value="Xyloglucan endotransglucosylase/hydrolase"/>
    <property type="match status" value="1"/>
</dbReference>
<dbReference type="Gene3D" id="2.60.120.200">
    <property type="match status" value="1"/>
</dbReference>
<dbReference type="InterPro" id="IPR044791">
    <property type="entry name" value="Beta-glucanase/XTH"/>
</dbReference>
<dbReference type="InterPro" id="IPR008264">
    <property type="entry name" value="Beta_glucanase"/>
</dbReference>
<dbReference type="InterPro" id="IPR013320">
    <property type="entry name" value="ConA-like_dom_sf"/>
</dbReference>
<dbReference type="InterPro" id="IPR000757">
    <property type="entry name" value="GH16"/>
</dbReference>
<dbReference type="InterPro" id="IPR008263">
    <property type="entry name" value="GH16_AS"/>
</dbReference>
<dbReference type="InterPro" id="IPR010713">
    <property type="entry name" value="XET_C"/>
</dbReference>
<dbReference type="InterPro" id="IPR016455">
    <property type="entry name" value="XTH"/>
</dbReference>
<dbReference type="PANTHER" id="PTHR31062">
    <property type="entry name" value="XYLOGLUCAN ENDOTRANSGLUCOSYLASE/HYDROLASE PROTEIN 8-RELATED"/>
    <property type="match status" value="1"/>
</dbReference>
<dbReference type="Pfam" id="PF00722">
    <property type="entry name" value="Glyco_hydro_16"/>
    <property type="match status" value="1"/>
</dbReference>
<dbReference type="Pfam" id="PF06955">
    <property type="entry name" value="XET_C"/>
    <property type="match status" value="1"/>
</dbReference>
<dbReference type="PIRSF" id="PIRSF005604">
    <property type="entry name" value="XET"/>
    <property type="match status" value="1"/>
</dbReference>
<dbReference type="PRINTS" id="PR00737">
    <property type="entry name" value="GLHYDRLASE16"/>
</dbReference>
<dbReference type="SUPFAM" id="SSF49899">
    <property type="entry name" value="Concanavalin A-like lectins/glucanases"/>
    <property type="match status" value="1"/>
</dbReference>
<dbReference type="PROSITE" id="PS01034">
    <property type="entry name" value="GH16_1"/>
    <property type="match status" value="1"/>
</dbReference>
<dbReference type="PROSITE" id="PS51762">
    <property type="entry name" value="GH16_2"/>
    <property type="match status" value="1"/>
</dbReference>
<feature type="signal peptide" evidence="3">
    <location>
        <begin position="1"/>
        <end position="31"/>
    </location>
</feature>
<feature type="chain" id="PRO_0000011808" description="Probable xyloglucan endotransglucosylase/hydrolase protein 8">
    <location>
        <begin position="32"/>
        <end position="305"/>
    </location>
</feature>
<feature type="domain" description="GH16" evidence="4">
    <location>
        <begin position="32"/>
        <end position="231"/>
    </location>
</feature>
<feature type="active site" description="Nucleophile" evidence="5">
    <location>
        <position position="115"/>
    </location>
</feature>
<feature type="active site" description="Proton donor" evidence="5">
    <location>
        <position position="119"/>
    </location>
</feature>
<feature type="binding site" evidence="2">
    <location>
        <position position="119"/>
    </location>
    <ligand>
        <name>xyloglucan</name>
        <dbReference type="ChEBI" id="CHEBI:18233"/>
    </ligand>
</feature>
<feature type="binding site" evidence="2">
    <location>
        <begin position="132"/>
        <end position="134"/>
    </location>
    <ligand>
        <name>xyloglucan</name>
        <dbReference type="ChEBI" id="CHEBI:18233"/>
    </ligand>
</feature>
<feature type="binding site" evidence="2">
    <location>
        <begin position="142"/>
        <end position="144"/>
    </location>
    <ligand>
        <name>xyloglucan</name>
        <dbReference type="ChEBI" id="CHEBI:18233"/>
    </ligand>
</feature>
<feature type="binding site" evidence="2">
    <location>
        <begin position="210"/>
        <end position="211"/>
    </location>
    <ligand>
        <name>xyloglucan</name>
        <dbReference type="ChEBI" id="CHEBI:18233"/>
    </ligand>
</feature>
<feature type="binding site" evidence="2">
    <location>
        <position position="215"/>
    </location>
    <ligand>
        <name>xyloglucan</name>
        <dbReference type="ChEBI" id="CHEBI:18233"/>
    </ligand>
</feature>
<feature type="binding site" evidence="2">
    <location>
        <position position="291"/>
    </location>
    <ligand>
        <name>xyloglucan</name>
        <dbReference type="ChEBI" id="CHEBI:18233"/>
    </ligand>
</feature>
<feature type="site" description="Important for catalytic activity" evidence="2">
    <location>
        <position position="117"/>
    </location>
</feature>
<feature type="glycosylation site" description="N-linked (GlcNAc...) asparagine" evidence="3">
    <location>
        <position position="61"/>
    </location>
</feature>
<feature type="glycosylation site" description="N-linked (GlcNAc...) asparagine" evidence="3">
    <location>
        <position position="66"/>
    </location>
</feature>
<feature type="glycosylation site" description="N-linked (GlcNAc...) asparagine" evidence="3">
    <location>
        <position position="123"/>
    </location>
</feature>
<feature type="glycosylation site" description="N-linked (GlcNAc...) asparagine" evidence="3">
    <location>
        <position position="138"/>
    </location>
</feature>
<feature type="disulfide bond" evidence="2">
    <location>
        <begin position="239"/>
        <end position="248"/>
    </location>
</feature>
<feature type="disulfide bond" evidence="2">
    <location>
        <begin position="286"/>
        <end position="299"/>
    </location>
</feature>
<accession>Q8L9A9</accession>
<accession>Q0WR89</accession>
<accession>Q9LPY1</accession>
<name>XTH8_ARATH</name>
<comment type="function">
    <text evidence="1">Catalyzes xyloglucan endohydrolysis (XEH) and/or endotransglycosylation (XET). Cleaves and religates xyloglucan polymers, an essential constituent of the primary cell wall, and thereby participates in cell wall construction of growing tissues (By similarity).</text>
</comment>
<comment type="catalytic activity">
    <reaction>
        <text>breaks a beta-(1-&gt;4) bond in the backbone of a xyloglucan and transfers the xyloglucanyl segment on to O-4 of the non-reducing terminal glucose residue of an acceptor, which can be a xyloglucan or an oligosaccharide of xyloglucan.</text>
        <dbReference type="EC" id="2.4.1.207"/>
    </reaction>
</comment>
<comment type="subcellular location">
    <subcellularLocation>
        <location evidence="6">Secreted</location>
        <location evidence="6">Cell wall</location>
    </subcellularLocation>
    <subcellularLocation>
        <location evidence="6">Secreted</location>
        <location evidence="6">Extracellular space</location>
        <location evidence="6">Apoplast</location>
    </subcellularLocation>
</comment>
<comment type="PTM">
    <text evidence="1">Contains at least one intrachain disulfide bond essential for its enzymatic activity.</text>
</comment>
<comment type="similarity">
    <text evidence="6">Belongs to the glycosyl hydrolase 16 family. XTH group 1 subfamily.</text>
</comment>
<comment type="sequence caution" evidence="6">
    <conflict type="erroneous gene model prediction">
        <sequence resource="EMBL-CDS" id="AAF16642"/>
    </conflict>
</comment>
<comment type="sequence caution" evidence="6">
    <conflict type="erroneous initiation">
        <sequence resource="EMBL-CDS" id="AAM66078"/>
    </conflict>
    <text>Truncated N-terminus.</text>
</comment>
<organism>
    <name type="scientific">Arabidopsis thaliana</name>
    <name type="common">Mouse-ear cress</name>
    <dbReference type="NCBI Taxonomy" id="3702"/>
    <lineage>
        <taxon>Eukaryota</taxon>
        <taxon>Viridiplantae</taxon>
        <taxon>Streptophyta</taxon>
        <taxon>Embryophyta</taxon>
        <taxon>Tracheophyta</taxon>
        <taxon>Spermatophyta</taxon>
        <taxon>Magnoliopsida</taxon>
        <taxon>eudicotyledons</taxon>
        <taxon>Gunneridae</taxon>
        <taxon>Pentapetalae</taxon>
        <taxon>rosids</taxon>
        <taxon>malvids</taxon>
        <taxon>Brassicales</taxon>
        <taxon>Brassicaceae</taxon>
        <taxon>Camelineae</taxon>
        <taxon>Arabidopsis</taxon>
    </lineage>
</organism>
<sequence length="305" mass="35565">METERRIITSCSAMTALFLFMTALMASSSIAATPTQSFEDNFNIMWSENHFTTSDDGEIWNLSLDNDTGCGFQTKHMYRFGWFSMKLKLVGGDSAGVVTAYYMCSENGAGPERDEIDFEFLGNRTGQPYIIQTNVYKNGTGNREMRHSLWFDPTKDYHTYSILWNNHQLVFFVDRVPIRVYKNSDKVPNNDFFPNQKPMYLFSSIWNADDWATRGGLEKTDWKKAPFVSSYKDFAVEGCRWKDPFPACVSTTTENWWDQYDAWHLSKTQKMDYAWVQRNLVVYDYCKDSERFPTLPWECSISPWA</sequence>
<evidence type="ECO:0000250" key="1"/>
<evidence type="ECO:0000250" key="2">
    <source>
        <dbReference type="UniProtKB" id="Q8GZD5"/>
    </source>
</evidence>
<evidence type="ECO:0000255" key="3"/>
<evidence type="ECO:0000255" key="4">
    <source>
        <dbReference type="PROSITE-ProRule" id="PRU01098"/>
    </source>
</evidence>
<evidence type="ECO:0000255" key="5">
    <source>
        <dbReference type="PROSITE-ProRule" id="PRU10064"/>
    </source>
</evidence>
<evidence type="ECO:0000305" key="6"/>